<protein>
    <recommendedName>
        <fullName evidence="1">ATP-dependent Clp protease proteolytic subunit</fullName>
        <ecNumber evidence="1">3.4.21.92</ecNumber>
    </recommendedName>
    <alternativeName>
        <fullName evidence="1">Endopeptidase Clp</fullName>
    </alternativeName>
</protein>
<dbReference type="EC" id="3.4.21.92" evidence="1"/>
<dbReference type="EMBL" id="CP000911">
    <property type="protein sequence ID" value="ABY38212.1"/>
    <property type="molecule type" value="Genomic_DNA"/>
</dbReference>
<dbReference type="RefSeq" id="WP_002964237.1">
    <property type="nucleotide sequence ID" value="NC_010169.1"/>
</dbReference>
<dbReference type="SMR" id="B0CGR1"/>
<dbReference type="MEROPS" id="S14.001"/>
<dbReference type="KEGG" id="bmt:BSUIS_A1158"/>
<dbReference type="HOGENOM" id="CLU_058707_3_2_5"/>
<dbReference type="PRO" id="PR:B0CGR1"/>
<dbReference type="Proteomes" id="UP000008545">
    <property type="component" value="Chromosome I"/>
</dbReference>
<dbReference type="GO" id="GO:0005737">
    <property type="term" value="C:cytoplasm"/>
    <property type="evidence" value="ECO:0007669"/>
    <property type="project" value="UniProtKB-SubCell"/>
</dbReference>
<dbReference type="GO" id="GO:0009368">
    <property type="term" value="C:endopeptidase Clp complex"/>
    <property type="evidence" value="ECO:0007669"/>
    <property type="project" value="TreeGrafter"/>
</dbReference>
<dbReference type="GO" id="GO:0004176">
    <property type="term" value="F:ATP-dependent peptidase activity"/>
    <property type="evidence" value="ECO:0007669"/>
    <property type="project" value="InterPro"/>
</dbReference>
<dbReference type="GO" id="GO:0051117">
    <property type="term" value="F:ATPase binding"/>
    <property type="evidence" value="ECO:0007669"/>
    <property type="project" value="TreeGrafter"/>
</dbReference>
<dbReference type="GO" id="GO:0004252">
    <property type="term" value="F:serine-type endopeptidase activity"/>
    <property type="evidence" value="ECO:0007669"/>
    <property type="project" value="UniProtKB-UniRule"/>
</dbReference>
<dbReference type="GO" id="GO:0006515">
    <property type="term" value="P:protein quality control for misfolded or incompletely synthesized proteins"/>
    <property type="evidence" value="ECO:0007669"/>
    <property type="project" value="TreeGrafter"/>
</dbReference>
<dbReference type="CDD" id="cd07017">
    <property type="entry name" value="S14_ClpP_2"/>
    <property type="match status" value="1"/>
</dbReference>
<dbReference type="FunFam" id="3.90.226.10:FF:000001">
    <property type="entry name" value="ATP-dependent Clp protease proteolytic subunit"/>
    <property type="match status" value="1"/>
</dbReference>
<dbReference type="Gene3D" id="3.90.226.10">
    <property type="entry name" value="2-enoyl-CoA Hydratase, Chain A, domain 1"/>
    <property type="match status" value="1"/>
</dbReference>
<dbReference type="HAMAP" id="MF_00444">
    <property type="entry name" value="ClpP"/>
    <property type="match status" value="1"/>
</dbReference>
<dbReference type="InterPro" id="IPR001907">
    <property type="entry name" value="ClpP"/>
</dbReference>
<dbReference type="InterPro" id="IPR029045">
    <property type="entry name" value="ClpP/crotonase-like_dom_sf"/>
</dbReference>
<dbReference type="InterPro" id="IPR023562">
    <property type="entry name" value="ClpP/TepA"/>
</dbReference>
<dbReference type="InterPro" id="IPR033135">
    <property type="entry name" value="ClpP_His_AS"/>
</dbReference>
<dbReference type="InterPro" id="IPR018215">
    <property type="entry name" value="ClpP_Ser_AS"/>
</dbReference>
<dbReference type="NCBIfam" id="NF001368">
    <property type="entry name" value="PRK00277.1"/>
    <property type="match status" value="1"/>
</dbReference>
<dbReference type="NCBIfam" id="NF009205">
    <property type="entry name" value="PRK12553.1"/>
    <property type="match status" value="1"/>
</dbReference>
<dbReference type="PANTHER" id="PTHR10381">
    <property type="entry name" value="ATP-DEPENDENT CLP PROTEASE PROTEOLYTIC SUBUNIT"/>
    <property type="match status" value="1"/>
</dbReference>
<dbReference type="PANTHER" id="PTHR10381:SF70">
    <property type="entry name" value="ATP-DEPENDENT CLP PROTEASE PROTEOLYTIC SUBUNIT"/>
    <property type="match status" value="1"/>
</dbReference>
<dbReference type="Pfam" id="PF00574">
    <property type="entry name" value="CLP_protease"/>
    <property type="match status" value="1"/>
</dbReference>
<dbReference type="PRINTS" id="PR00127">
    <property type="entry name" value="CLPPROTEASEP"/>
</dbReference>
<dbReference type="SUPFAM" id="SSF52096">
    <property type="entry name" value="ClpP/crotonase"/>
    <property type="match status" value="1"/>
</dbReference>
<dbReference type="PROSITE" id="PS00382">
    <property type="entry name" value="CLP_PROTEASE_HIS"/>
    <property type="match status" value="1"/>
</dbReference>
<dbReference type="PROSITE" id="PS00381">
    <property type="entry name" value="CLP_PROTEASE_SER"/>
    <property type="match status" value="1"/>
</dbReference>
<name>CLPP_BRUSI</name>
<accession>B0CGR1</accession>
<comment type="function">
    <text evidence="1">Cleaves peptides in various proteins in a process that requires ATP hydrolysis. Has a chymotrypsin-like activity. Plays a major role in the degradation of misfolded proteins.</text>
</comment>
<comment type="catalytic activity">
    <reaction evidence="1">
        <text>Hydrolysis of proteins to small peptides in the presence of ATP and magnesium. alpha-casein is the usual test substrate. In the absence of ATP, only oligopeptides shorter than five residues are hydrolyzed (such as succinyl-Leu-Tyr-|-NHMec, and Leu-Tyr-Leu-|-Tyr-Trp, in which cleavage of the -Tyr-|-Leu- and -Tyr-|-Trp bonds also occurs).</text>
        <dbReference type="EC" id="3.4.21.92"/>
    </reaction>
</comment>
<comment type="subunit">
    <text evidence="1">Fourteen ClpP subunits assemble into 2 heptameric rings which stack back to back to give a disk-like structure with a central cavity, resembling the structure of eukaryotic proteasomes.</text>
</comment>
<comment type="subcellular location">
    <subcellularLocation>
        <location evidence="1">Cytoplasm</location>
    </subcellularLocation>
</comment>
<comment type="similarity">
    <text evidence="1">Belongs to the peptidase S14 family.</text>
</comment>
<organism>
    <name type="scientific">Brucella suis (strain ATCC 23445 / NCTC 10510)</name>
    <dbReference type="NCBI Taxonomy" id="470137"/>
    <lineage>
        <taxon>Bacteria</taxon>
        <taxon>Pseudomonadati</taxon>
        <taxon>Pseudomonadota</taxon>
        <taxon>Alphaproteobacteria</taxon>
        <taxon>Hyphomicrobiales</taxon>
        <taxon>Brucellaceae</taxon>
        <taxon>Brucella/Ochrobactrum group</taxon>
        <taxon>Brucella</taxon>
    </lineage>
</organism>
<sequence>MRDPIETVMNLVPMVVEQTNRGERAYDIFSRLLKERIIFVNGPVEDGMSMLVCAQLLFLEAENPKKEINMYINSPGGVVTSGMAIYDTMQFIRPPVSTLCMGQAASMGSLLLTAGATGHRYALPNARIMVHQPSGGFQGQASDIERHAQDIIKMKRRLNEIYVKHTGRDYDTIERTLDRDHFMTAQEALEFGLIDKVVEARDVSADESK</sequence>
<reference key="1">
    <citation type="submission" date="2007-12" db="EMBL/GenBank/DDBJ databases">
        <title>Brucella suis ATCC 23445 whole genome shotgun sequencing project.</title>
        <authorList>
            <person name="Setubal J.C."/>
            <person name="Bowns C."/>
            <person name="Boyle S."/>
            <person name="Crasta O.R."/>
            <person name="Czar M.J."/>
            <person name="Dharmanolla C."/>
            <person name="Gillespie J.J."/>
            <person name="Kenyon R.W."/>
            <person name="Lu J."/>
            <person name="Mane S."/>
            <person name="Mohapatra S."/>
            <person name="Nagrani S."/>
            <person name="Purkayastha A."/>
            <person name="Rajasimha H.K."/>
            <person name="Shallom J.M."/>
            <person name="Shallom S."/>
            <person name="Shukla M."/>
            <person name="Snyder E.E."/>
            <person name="Sobral B.W."/>
            <person name="Wattam A.R."/>
            <person name="Will R."/>
            <person name="Williams K."/>
            <person name="Yoo H."/>
            <person name="Bruce D."/>
            <person name="Detter C."/>
            <person name="Munk C."/>
            <person name="Brettin T.S."/>
        </authorList>
    </citation>
    <scope>NUCLEOTIDE SEQUENCE [LARGE SCALE GENOMIC DNA]</scope>
    <source>
        <strain>ATCC 23445 / NCTC 10510</strain>
    </source>
</reference>
<keyword id="KW-0963">Cytoplasm</keyword>
<keyword id="KW-0378">Hydrolase</keyword>
<keyword id="KW-0645">Protease</keyword>
<keyword id="KW-0720">Serine protease</keyword>
<evidence type="ECO:0000255" key="1">
    <source>
        <dbReference type="HAMAP-Rule" id="MF_00444"/>
    </source>
</evidence>
<proteinExistence type="inferred from homology"/>
<gene>
    <name evidence="1" type="primary">clpP</name>
    <name type="ordered locus">BSUIS_A1158</name>
</gene>
<feature type="chain" id="PRO_1000080883" description="ATP-dependent Clp protease proteolytic subunit">
    <location>
        <begin position="1"/>
        <end position="209"/>
    </location>
</feature>
<feature type="active site" description="Nucleophile" evidence="1">
    <location>
        <position position="106"/>
    </location>
</feature>
<feature type="active site" evidence="1">
    <location>
        <position position="131"/>
    </location>
</feature>